<dbReference type="EMBL" id="AK077290">
    <property type="protein sequence ID" value="BAC36733.1"/>
    <property type="molecule type" value="mRNA"/>
</dbReference>
<dbReference type="EMBL" id="AK083718">
    <property type="protein sequence ID" value="BAC39004.1"/>
    <property type="molecule type" value="mRNA"/>
</dbReference>
<dbReference type="EMBL" id="BC060961">
    <property type="protein sequence ID" value="AAH60961.1"/>
    <property type="molecule type" value="mRNA"/>
</dbReference>
<dbReference type="CCDS" id="CCDS29099.1"/>
<dbReference type="RefSeq" id="NP_766213.1">
    <property type="nucleotide sequence ID" value="NM_172625.2"/>
</dbReference>
<dbReference type="SMR" id="Q8BHA0"/>
<dbReference type="BioGRID" id="230377">
    <property type="interactions" value="1"/>
</dbReference>
<dbReference type="ComplexPortal" id="CPX-878">
    <property type="entry name" value="INO80 chromatin remodeling complex"/>
</dbReference>
<dbReference type="FunCoup" id="Q8BHA0">
    <property type="interactions" value="491"/>
</dbReference>
<dbReference type="IntAct" id="Q8BHA0">
    <property type="interactions" value="1"/>
</dbReference>
<dbReference type="MINT" id="Q8BHA0"/>
<dbReference type="STRING" id="10090.ENSMUSP00000114643"/>
<dbReference type="GlyGen" id="Q8BHA0">
    <property type="glycosylation" value="1 site"/>
</dbReference>
<dbReference type="iPTMnet" id="Q8BHA0"/>
<dbReference type="PhosphoSitePlus" id="Q8BHA0"/>
<dbReference type="jPOST" id="Q8BHA0"/>
<dbReference type="PaxDb" id="10090-ENSMUSP00000114643"/>
<dbReference type="PeptideAtlas" id="Q8BHA0"/>
<dbReference type="ProteomicsDB" id="266979"/>
<dbReference type="Pumba" id="Q8BHA0"/>
<dbReference type="Antibodypedia" id="62486">
    <property type="antibodies" value="25 antibodies from 13 providers"/>
</dbReference>
<dbReference type="DNASU" id="225280"/>
<dbReference type="Ensembl" id="ENSMUST00000153360.8">
    <property type="protein sequence ID" value="ENSMUSP00000114643.2"/>
    <property type="gene ID" value="ENSMUSG00000047989.12"/>
</dbReference>
<dbReference type="GeneID" id="225280"/>
<dbReference type="KEGG" id="mmu:225280"/>
<dbReference type="UCSC" id="uc008ego.1">
    <property type="organism name" value="mouse"/>
</dbReference>
<dbReference type="AGR" id="MGI:2443014"/>
<dbReference type="CTD" id="125476"/>
<dbReference type="MGI" id="MGI:2443014">
    <property type="gene designation" value="Ino80c"/>
</dbReference>
<dbReference type="VEuPathDB" id="HostDB:ENSMUSG00000047989"/>
<dbReference type="eggNOG" id="KOG4137">
    <property type="taxonomic scope" value="Eukaryota"/>
</dbReference>
<dbReference type="GeneTree" id="ENSGT00390000014303"/>
<dbReference type="InParanoid" id="Q8BHA0"/>
<dbReference type="OMA" id="ATTQAQM"/>
<dbReference type="OrthoDB" id="63970at9989"/>
<dbReference type="TreeFam" id="TF323529"/>
<dbReference type="Reactome" id="R-MMU-5689603">
    <property type="pathway name" value="UCH proteinases"/>
</dbReference>
<dbReference type="Reactome" id="R-MMU-5696394">
    <property type="pathway name" value="DNA Damage Recognition in GG-NER"/>
</dbReference>
<dbReference type="BioGRID-ORCS" id="225280">
    <property type="hits" value="5 hits in 116 CRISPR screens"/>
</dbReference>
<dbReference type="ChiTaRS" id="Ino80c">
    <property type="organism name" value="mouse"/>
</dbReference>
<dbReference type="PRO" id="PR:Q8BHA0"/>
<dbReference type="Proteomes" id="UP000000589">
    <property type="component" value="Chromosome 18"/>
</dbReference>
<dbReference type="RNAct" id="Q8BHA0">
    <property type="molecule type" value="protein"/>
</dbReference>
<dbReference type="Bgee" id="ENSMUSG00000047989">
    <property type="expression patterns" value="Expressed in spermatocyte and 250 other cell types or tissues"/>
</dbReference>
<dbReference type="ExpressionAtlas" id="Q8BHA0">
    <property type="expression patterns" value="baseline and differential"/>
</dbReference>
<dbReference type="GO" id="GO:0005829">
    <property type="term" value="C:cytosol"/>
    <property type="evidence" value="ECO:0007669"/>
    <property type="project" value="Ensembl"/>
</dbReference>
<dbReference type="GO" id="GO:0001650">
    <property type="term" value="C:fibrillar center"/>
    <property type="evidence" value="ECO:0007669"/>
    <property type="project" value="Ensembl"/>
</dbReference>
<dbReference type="GO" id="GO:0031011">
    <property type="term" value="C:Ino80 complex"/>
    <property type="evidence" value="ECO:0000266"/>
    <property type="project" value="ComplexPortal"/>
</dbReference>
<dbReference type="GO" id="GO:0071339">
    <property type="term" value="C:MLL1 complex"/>
    <property type="evidence" value="ECO:0000250"/>
    <property type="project" value="UniProtKB"/>
</dbReference>
<dbReference type="GO" id="GO:0006338">
    <property type="term" value="P:chromatin remodeling"/>
    <property type="evidence" value="ECO:0000266"/>
    <property type="project" value="ComplexPortal"/>
</dbReference>
<dbReference type="GO" id="GO:0006310">
    <property type="term" value="P:DNA recombination"/>
    <property type="evidence" value="ECO:0007669"/>
    <property type="project" value="UniProtKB-KW"/>
</dbReference>
<dbReference type="GO" id="GO:0006281">
    <property type="term" value="P:DNA repair"/>
    <property type="evidence" value="ECO:0007669"/>
    <property type="project" value="UniProtKB-KW"/>
</dbReference>
<dbReference type="GO" id="GO:0045739">
    <property type="term" value="P:positive regulation of DNA repair"/>
    <property type="evidence" value="ECO:0000314"/>
    <property type="project" value="ComplexPortal"/>
</dbReference>
<dbReference type="GO" id="GO:0045893">
    <property type="term" value="P:positive regulation of DNA-templated transcription"/>
    <property type="evidence" value="ECO:0000266"/>
    <property type="project" value="ComplexPortal"/>
</dbReference>
<dbReference type="GO" id="GO:1904507">
    <property type="term" value="P:positive regulation of telomere maintenance in response to DNA damage"/>
    <property type="evidence" value="ECO:0000315"/>
    <property type="project" value="ComplexPortal"/>
</dbReference>
<dbReference type="GO" id="GO:0051726">
    <property type="term" value="P:regulation of cell cycle"/>
    <property type="evidence" value="ECO:0000266"/>
    <property type="project" value="ComplexPortal"/>
</dbReference>
<dbReference type="GO" id="GO:0033044">
    <property type="term" value="P:regulation of chromosome organization"/>
    <property type="evidence" value="ECO:0000266"/>
    <property type="project" value="ComplexPortal"/>
</dbReference>
<dbReference type="GO" id="GO:0006282">
    <property type="term" value="P:regulation of DNA repair"/>
    <property type="evidence" value="ECO:0000314"/>
    <property type="project" value="ComplexPortal"/>
</dbReference>
<dbReference type="GO" id="GO:0006275">
    <property type="term" value="P:regulation of DNA replication"/>
    <property type="evidence" value="ECO:0000266"/>
    <property type="project" value="ComplexPortal"/>
</dbReference>
<dbReference type="GO" id="GO:0060382">
    <property type="term" value="P:regulation of DNA strand elongation"/>
    <property type="evidence" value="ECO:0000266"/>
    <property type="project" value="ComplexPortal"/>
</dbReference>
<dbReference type="GO" id="GO:0045995">
    <property type="term" value="P:regulation of embryonic development"/>
    <property type="evidence" value="ECO:0000315"/>
    <property type="project" value="ComplexPortal"/>
</dbReference>
<dbReference type="GO" id="GO:0000723">
    <property type="term" value="P:telomere maintenance"/>
    <property type="evidence" value="ECO:0000315"/>
    <property type="project" value="ComplexPortal"/>
</dbReference>
<dbReference type="InterPro" id="IPR029525">
    <property type="entry name" value="INO80C/Ies6"/>
</dbReference>
<dbReference type="InterPro" id="IPR013272">
    <property type="entry name" value="Vps72/YL1_C"/>
</dbReference>
<dbReference type="PANTHER" id="PTHR31200">
    <property type="entry name" value="INO80 COMPLEX SUBUNIT C"/>
    <property type="match status" value="1"/>
</dbReference>
<dbReference type="PANTHER" id="PTHR31200:SF1">
    <property type="entry name" value="INO80 COMPLEX SUBUNIT C"/>
    <property type="match status" value="1"/>
</dbReference>
<dbReference type="Pfam" id="PF08265">
    <property type="entry name" value="YL1_C"/>
    <property type="match status" value="1"/>
</dbReference>
<dbReference type="SMART" id="SM00993">
    <property type="entry name" value="YL1_C"/>
    <property type="match status" value="1"/>
</dbReference>
<name>IN80C_MOUSE</name>
<reference key="1">
    <citation type="journal article" date="2005" name="Science">
        <title>The transcriptional landscape of the mammalian genome.</title>
        <authorList>
            <person name="Carninci P."/>
            <person name="Kasukawa T."/>
            <person name="Katayama S."/>
            <person name="Gough J."/>
            <person name="Frith M.C."/>
            <person name="Maeda N."/>
            <person name="Oyama R."/>
            <person name="Ravasi T."/>
            <person name="Lenhard B."/>
            <person name="Wells C."/>
            <person name="Kodzius R."/>
            <person name="Shimokawa K."/>
            <person name="Bajic V.B."/>
            <person name="Brenner S.E."/>
            <person name="Batalov S."/>
            <person name="Forrest A.R."/>
            <person name="Zavolan M."/>
            <person name="Davis M.J."/>
            <person name="Wilming L.G."/>
            <person name="Aidinis V."/>
            <person name="Allen J.E."/>
            <person name="Ambesi-Impiombato A."/>
            <person name="Apweiler R."/>
            <person name="Aturaliya R.N."/>
            <person name="Bailey T.L."/>
            <person name="Bansal M."/>
            <person name="Baxter L."/>
            <person name="Beisel K.W."/>
            <person name="Bersano T."/>
            <person name="Bono H."/>
            <person name="Chalk A.M."/>
            <person name="Chiu K.P."/>
            <person name="Choudhary V."/>
            <person name="Christoffels A."/>
            <person name="Clutterbuck D.R."/>
            <person name="Crowe M.L."/>
            <person name="Dalla E."/>
            <person name="Dalrymple B.P."/>
            <person name="de Bono B."/>
            <person name="Della Gatta G."/>
            <person name="di Bernardo D."/>
            <person name="Down T."/>
            <person name="Engstrom P."/>
            <person name="Fagiolini M."/>
            <person name="Faulkner G."/>
            <person name="Fletcher C.F."/>
            <person name="Fukushima T."/>
            <person name="Furuno M."/>
            <person name="Futaki S."/>
            <person name="Gariboldi M."/>
            <person name="Georgii-Hemming P."/>
            <person name="Gingeras T.R."/>
            <person name="Gojobori T."/>
            <person name="Green R.E."/>
            <person name="Gustincich S."/>
            <person name="Harbers M."/>
            <person name="Hayashi Y."/>
            <person name="Hensch T.K."/>
            <person name="Hirokawa N."/>
            <person name="Hill D."/>
            <person name="Huminiecki L."/>
            <person name="Iacono M."/>
            <person name="Ikeo K."/>
            <person name="Iwama A."/>
            <person name="Ishikawa T."/>
            <person name="Jakt M."/>
            <person name="Kanapin A."/>
            <person name="Katoh M."/>
            <person name="Kawasawa Y."/>
            <person name="Kelso J."/>
            <person name="Kitamura H."/>
            <person name="Kitano H."/>
            <person name="Kollias G."/>
            <person name="Krishnan S.P."/>
            <person name="Kruger A."/>
            <person name="Kummerfeld S.K."/>
            <person name="Kurochkin I.V."/>
            <person name="Lareau L.F."/>
            <person name="Lazarevic D."/>
            <person name="Lipovich L."/>
            <person name="Liu J."/>
            <person name="Liuni S."/>
            <person name="McWilliam S."/>
            <person name="Madan Babu M."/>
            <person name="Madera M."/>
            <person name="Marchionni L."/>
            <person name="Matsuda H."/>
            <person name="Matsuzawa S."/>
            <person name="Miki H."/>
            <person name="Mignone F."/>
            <person name="Miyake S."/>
            <person name="Morris K."/>
            <person name="Mottagui-Tabar S."/>
            <person name="Mulder N."/>
            <person name="Nakano N."/>
            <person name="Nakauchi H."/>
            <person name="Ng P."/>
            <person name="Nilsson R."/>
            <person name="Nishiguchi S."/>
            <person name="Nishikawa S."/>
            <person name="Nori F."/>
            <person name="Ohara O."/>
            <person name="Okazaki Y."/>
            <person name="Orlando V."/>
            <person name="Pang K.C."/>
            <person name="Pavan W.J."/>
            <person name="Pavesi G."/>
            <person name="Pesole G."/>
            <person name="Petrovsky N."/>
            <person name="Piazza S."/>
            <person name="Reed J."/>
            <person name="Reid J.F."/>
            <person name="Ring B.Z."/>
            <person name="Ringwald M."/>
            <person name="Rost B."/>
            <person name="Ruan Y."/>
            <person name="Salzberg S.L."/>
            <person name="Sandelin A."/>
            <person name="Schneider C."/>
            <person name="Schoenbach C."/>
            <person name="Sekiguchi K."/>
            <person name="Semple C.A."/>
            <person name="Seno S."/>
            <person name="Sessa L."/>
            <person name="Sheng Y."/>
            <person name="Shibata Y."/>
            <person name="Shimada H."/>
            <person name="Shimada K."/>
            <person name="Silva D."/>
            <person name="Sinclair B."/>
            <person name="Sperling S."/>
            <person name="Stupka E."/>
            <person name="Sugiura K."/>
            <person name="Sultana R."/>
            <person name="Takenaka Y."/>
            <person name="Taki K."/>
            <person name="Tammoja K."/>
            <person name="Tan S.L."/>
            <person name="Tang S."/>
            <person name="Taylor M.S."/>
            <person name="Tegner J."/>
            <person name="Teichmann S.A."/>
            <person name="Ueda H.R."/>
            <person name="van Nimwegen E."/>
            <person name="Verardo R."/>
            <person name="Wei C.L."/>
            <person name="Yagi K."/>
            <person name="Yamanishi H."/>
            <person name="Zabarovsky E."/>
            <person name="Zhu S."/>
            <person name="Zimmer A."/>
            <person name="Hide W."/>
            <person name="Bult C."/>
            <person name="Grimmond S.M."/>
            <person name="Teasdale R.D."/>
            <person name="Liu E.T."/>
            <person name="Brusic V."/>
            <person name="Quackenbush J."/>
            <person name="Wahlestedt C."/>
            <person name="Mattick J.S."/>
            <person name="Hume D.A."/>
            <person name="Kai C."/>
            <person name="Sasaki D."/>
            <person name="Tomaru Y."/>
            <person name="Fukuda S."/>
            <person name="Kanamori-Katayama M."/>
            <person name="Suzuki M."/>
            <person name="Aoki J."/>
            <person name="Arakawa T."/>
            <person name="Iida J."/>
            <person name="Imamura K."/>
            <person name="Itoh M."/>
            <person name="Kato T."/>
            <person name="Kawaji H."/>
            <person name="Kawagashira N."/>
            <person name="Kawashima T."/>
            <person name="Kojima M."/>
            <person name="Kondo S."/>
            <person name="Konno H."/>
            <person name="Nakano K."/>
            <person name="Ninomiya N."/>
            <person name="Nishio T."/>
            <person name="Okada M."/>
            <person name="Plessy C."/>
            <person name="Shibata K."/>
            <person name="Shiraki T."/>
            <person name="Suzuki S."/>
            <person name="Tagami M."/>
            <person name="Waki K."/>
            <person name="Watahiki A."/>
            <person name="Okamura-Oho Y."/>
            <person name="Suzuki H."/>
            <person name="Kawai J."/>
            <person name="Hayashizaki Y."/>
        </authorList>
    </citation>
    <scope>NUCLEOTIDE SEQUENCE [LARGE SCALE MRNA]</scope>
    <source>
        <strain>C57BL/6J</strain>
        <tissue>Embryo</tissue>
        <tissue>Ovary</tissue>
        <tissue>Uterus</tissue>
    </source>
</reference>
<reference key="2">
    <citation type="journal article" date="2004" name="Genome Res.">
        <title>The status, quality, and expansion of the NIH full-length cDNA project: the Mammalian Gene Collection (MGC).</title>
        <authorList>
            <consortium name="The MGC Project Team"/>
        </authorList>
    </citation>
    <scope>NUCLEOTIDE SEQUENCE [LARGE SCALE MRNA]</scope>
    <source>
        <tissue>Testis</tissue>
    </source>
</reference>
<reference key="3">
    <citation type="journal article" date="2010" name="Cell">
        <title>A tissue-specific atlas of mouse protein phosphorylation and expression.</title>
        <authorList>
            <person name="Huttlin E.L."/>
            <person name="Jedrychowski M.P."/>
            <person name="Elias J.E."/>
            <person name="Goswami T."/>
            <person name="Rad R."/>
            <person name="Beausoleil S.A."/>
            <person name="Villen J."/>
            <person name="Haas W."/>
            <person name="Sowa M.E."/>
            <person name="Gygi S.P."/>
        </authorList>
    </citation>
    <scope>IDENTIFICATION BY MASS SPECTROMETRY [LARGE SCALE ANALYSIS]</scope>
    <source>
        <tissue>Kidney</tissue>
    </source>
</reference>
<sequence>MAAQIPIVAATSTPAVARNSKKRPASPSHNSSGGGYGASKKKKLSASGFAQGVSIEAMNESKMASSELSSGPVEKAAKPLPFKDPNFVHSGHGGAVAGKKNRTWKNLKQILAAERALPWQLNDPNYFSIDAPPSFKPAKKYSDISGLLANYTDPQSKLRFSTVEEFSYIRRLPSDVVTGYLALRKATSIVP</sequence>
<comment type="function">
    <text>Proposed core component of the chromatin remodeling INO80 complex which is involved in transcriptional regulation, DNA replication and probably DNA repair.</text>
</comment>
<comment type="subunit">
    <text evidence="1">Component of the chromatin remodeling INO80 complex; specifically part of a complex module associated with the helicase ATP-binding and the helicase C-terminal domain of INO80. Component of some MLL1/MLL complex, at least composed of the core components KMT2A/MLL1, ASH2L, HCFC1/HCF1, WDR5 and RBBP5, as well as the facultative components BACC1, CHD8, E2F6, HSP70, INO80C, KANSL1, LAS1L, MAX, MCRS1, MGA, MYST1/MOF, PELP1, PHF20, PRP31, RING2, RUVB1/TIP49A, RUVB2/TIP49B, SENP3, TAF1, TAF4, TAF6, TAF7, TAF9 and TEX10 (By similarity).</text>
</comment>
<comment type="subcellular location">
    <subcellularLocation>
        <location evidence="1">Nucleus</location>
    </subcellularLocation>
</comment>
<accession>Q8BHA0</accession>
<organism>
    <name type="scientific">Mus musculus</name>
    <name type="common">Mouse</name>
    <dbReference type="NCBI Taxonomy" id="10090"/>
    <lineage>
        <taxon>Eukaryota</taxon>
        <taxon>Metazoa</taxon>
        <taxon>Chordata</taxon>
        <taxon>Craniata</taxon>
        <taxon>Vertebrata</taxon>
        <taxon>Euteleostomi</taxon>
        <taxon>Mammalia</taxon>
        <taxon>Eutheria</taxon>
        <taxon>Euarchontoglires</taxon>
        <taxon>Glires</taxon>
        <taxon>Rodentia</taxon>
        <taxon>Myomorpha</taxon>
        <taxon>Muroidea</taxon>
        <taxon>Muridae</taxon>
        <taxon>Murinae</taxon>
        <taxon>Mus</taxon>
        <taxon>Mus</taxon>
    </lineage>
</organism>
<feature type="chain" id="PRO_0000079318" description="INO80 complex subunit C">
    <location>
        <begin position="1"/>
        <end position="191"/>
    </location>
</feature>
<feature type="region of interest" description="Disordered" evidence="2">
    <location>
        <begin position="1"/>
        <end position="41"/>
    </location>
</feature>
<evidence type="ECO:0000250" key="1"/>
<evidence type="ECO:0000256" key="2">
    <source>
        <dbReference type="SAM" id="MobiDB-lite"/>
    </source>
</evidence>
<keyword id="KW-0227">DNA damage</keyword>
<keyword id="KW-0233">DNA recombination</keyword>
<keyword id="KW-0234">DNA repair</keyword>
<keyword id="KW-0539">Nucleus</keyword>
<keyword id="KW-1185">Reference proteome</keyword>
<keyword id="KW-0804">Transcription</keyword>
<keyword id="KW-0805">Transcription regulation</keyword>
<proteinExistence type="evidence at protein level"/>
<protein>
    <recommendedName>
        <fullName>INO80 complex subunit C</fullName>
    </recommendedName>
</protein>
<gene>
    <name type="primary">Ino80c</name>
</gene>